<keyword id="KW-0021">Allosteric enzyme</keyword>
<keyword id="KW-0963">Cytoplasm</keyword>
<keyword id="KW-0378">Hydrolase</keyword>
<keyword id="KW-0479">Metal-binding</keyword>
<keyword id="KW-0645">Protease</keyword>
<keyword id="KW-1185">Reference proteome</keyword>
<keyword id="KW-0915">Sodium</keyword>
<keyword id="KW-0346">Stress response</keyword>
<keyword id="KW-0888">Threonine protease</keyword>
<sequence length="188" mass="20343">MEQYRGTTILSVRRGAEVALGGDGQVTLGNIVIKSTARKIRRLYQEKVLAGFAGGTADAFTLFERFEAKLDKHSGHLLRSAVELAKDWRTDRMLRRLEAMLAVADREHSLIITGNGDVLEPELGIAAIGSGGAFAQSAARALLENTDLAPLEIVKKSLTIAGDICIYSNQNHVIEVLGDRGQDSGVRE</sequence>
<organism>
    <name type="scientific">Thiobacillus denitrificans (strain ATCC 25259 / T1)</name>
    <dbReference type="NCBI Taxonomy" id="292415"/>
    <lineage>
        <taxon>Bacteria</taxon>
        <taxon>Pseudomonadati</taxon>
        <taxon>Pseudomonadota</taxon>
        <taxon>Betaproteobacteria</taxon>
        <taxon>Nitrosomonadales</taxon>
        <taxon>Thiobacillaceae</taxon>
        <taxon>Thiobacillus</taxon>
    </lineage>
</organism>
<gene>
    <name evidence="1" type="primary">hslV</name>
    <name type="ordered locus">Tbd_2541</name>
</gene>
<name>HSLV_THIDA</name>
<feature type="chain" id="PRO_1000012686" description="ATP-dependent protease subunit HslV">
    <location>
        <begin position="1"/>
        <end position="188"/>
    </location>
</feature>
<feature type="active site" evidence="1">
    <location>
        <position position="7"/>
    </location>
</feature>
<feature type="binding site" evidence="1">
    <location>
        <position position="162"/>
    </location>
    <ligand>
        <name>Na(+)</name>
        <dbReference type="ChEBI" id="CHEBI:29101"/>
    </ligand>
</feature>
<feature type="binding site" evidence="1">
    <location>
        <position position="165"/>
    </location>
    <ligand>
        <name>Na(+)</name>
        <dbReference type="ChEBI" id="CHEBI:29101"/>
    </ligand>
</feature>
<feature type="binding site" evidence="1">
    <location>
        <position position="168"/>
    </location>
    <ligand>
        <name>Na(+)</name>
        <dbReference type="ChEBI" id="CHEBI:29101"/>
    </ligand>
</feature>
<dbReference type="EC" id="3.4.25.2" evidence="1"/>
<dbReference type="EMBL" id="CP000116">
    <property type="protein sequence ID" value="AAZ98494.1"/>
    <property type="molecule type" value="Genomic_DNA"/>
</dbReference>
<dbReference type="RefSeq" id="WP_011313053.1">
    <property type="nucleotide sequence ID" value="NC_007404.1"/>
</dbReference>
<dbReference type="SMR" id="Q3SFW2"/>
<dbReference type="STRING" id="292415.Tbd_2541"/>
<dbReference type="MEROPS" id="T01.006"/>
<dbReference type="KEGG" id="tbd:Tbd_2541"/>
<dbReference type="eggNOG" id="COG5405">
    <property type="taxonomic scope" value="Bacteria"/>
</dbReference>
<dbReference type="HOGENOM" id="CLU_093872_1_0_4"/>
<dbReference type="OrthoDB" id="9804884at2"/>
<dbReference type="Proteomes" id="UP000008291">
    <property type="component" value="Chromosome"/>
</dbReference>
<dbReference type="GO" id="GO:0009376">
    <property type="term" value="C:HslUV protease complex"/>
    <property type="evidence" value="ECO:0007669"/>
    <property type="project" value="UniProtKB-UniRule"/>
</dbReference>
<dbReference type="GO" id="GO:0005839">
    <property type="term" value="C:proteasome core complex"/>
    <property type="evidence" value="ECO:0007669"/>
    <property type="project" value="InterPro"/>
</dbReference>
<dbReference type="GO" id="GO:0046872">
    <property type="term" value="F:metal ion binding"/>
    <property type="evidence" value="ECO:0007669"/>
    <property type="project" value="UniProtKB-KW"/>
</dbReference>
<dbReference type="GO" id="GO:0004298">
    <property type="term" value="F:threonine-type endopeptidase activity"/>
    <property type="evidence" value="ECO:0007669"/>
    <property type="project" value="UniProtKB-KW"/>
</dbReference>
<dbReference type="GO" id="GO:0051603">
    <property type="term" value="P:proteolysis involved in protein catabolic process"/>
    <property type="evidence" value="ECO:0007669"/>
    <property type="project" value="InterPro"/>
</dbReference>
<dbReference type="CDD" id="cd01913">
    <property type="entry name" value="protease_HslV"/>
    <property type="match status" value="1"/>
</dbReference>
<dbReference type="FunFam" id="3.60.20.10:FF:000002">
    <property type="entry name" value="ATP-dependent protease subunit HslV"/>
    <property type="match status" value="1"/>
</dbReference>
<dbReference type="Gene3D" id="3.60.20.10">
    <property type="entry name" value="Glutamine Phosphoribosylpyrophosphate, subunit 1, domain 1"/>
    <property type="match status" value="1"/>
</dbReference>
<dbReference type="HAMAP" id="MF_00248">
    <property type="entry name" value="HslV"/>
    <property type="match status" value="1"/>
</dbReference>
<dbReference type="InterPro" id="IPR022281">
    <property type="entry name" value="ATP-dep_Prtase_HsIV_su"/>
</dbReference>
<dbReference type="InterPro" id="IPR029055">
    <property type="entry name" value="Ntn_hydrolases_N"/>
</dbReference>
<dbReference type="InterPro" id="IPR001353">
    <property type="entry name" value="Proteasome_sua/b"/>
</dbReference>
<dbReference type="InterPro" id="IPR023333">
    <property type="entry name" value="Proteasome_suB-type"/>
</dbReference>
<dbReference type="NCBIfam" id="TIGR03692">
    <property type="entry name" value="ATP_dep_HslV"/>
    <property type="match status" value="1"/>
</dbReference>
<dbReference type="NCBIfam" id="NF003964">
    <property type="entry name" value="PRK05456.1"/>
    <property type="match status" value="1"/>
</dbReference>
<dbReference type="PANTHER" id="PTHR32194:SF0">
    <property type="entry name" value="ATP-DEPENDENT PROTEASE SUBUNIT HSLV"/>
    <property type="match status" value="1"/>
</dbReference>
<dbReference type="PANTHER" id="PTHR32194">
    <property type="entry name" value="METALLOPROTEASE TLDD"/>
    <property type="match status" value="1"/>
</dbReference>
<dbReference type="Pfam" id="PF00227">
    <property type="entry name" value="Proteasome"/>
    <property type="match status" value="1"/>
</dbReference>
<dbReference type="PIRSF" id="PIRSF039093">
    <property type="entry name" value="HslV"/>
    <property type="match status" value="1"/>
</dbReference>
<dbReference type="SUPFAM" id="SSF56235">
    <property type="entry name" value="N-terminal nucleophile aminohydrolases (Ntn hydrolases)"/>
    <property type="match status" value="1"/>
</dbReference>
<dbReference type="PROSITE" id="PS51476">
    <property type="entry name" value="PROTEASOME_BETA_2"/>
    <property type="match status" value="1"/>
</dbReference>
<reference key="1">
    <citation type="journal article" date="2006" name="J. Bacteriol.">
        <title>The genome sequence of the obligately chemolithoautotrophic, facultatively anaerobic bacterium Thiobacillus denitrificans.</title>
        <authorList>
            <person name="Beller H.R."/>
            <person name="Chain P.S."/>
            <person name="Letain T.E."/>
            <person name="Chakicherla A."/>
            <person name="Larimer F.W."/>
            <person name="Richardson P.M."/>
            <person name="Coleman M.A."/>
            <person name="Wood A.P."/>
            <person name="Kelly D.P."/>
        </authorList>
    </citation>
    <scope>NUCLEOTIDE SEQUENCE [LARGE SCALE GENOMIC DNA]</scope>
    <source>
        <strain>ATCC 25259 / T1</strain>
    </source>
</reference>
<evidence type="ECO:0000255" key="1">
    <source>
        <dbReference type="HAMAP-Rule" id="MF_00248"/>
    </source>
</evidence>
<accession>Q3SFW2</accession>
<protein>
    <recommendedName>
        <fullName evidence="1">ATP-dependent protease subunit HslV</fullName>
        <ecNumber evidence="1">3.4.25.2</ecNumber>
    </recommendedName>
</protein>
<proteinExistence type="inferred from homology"/>
<comment type="function">
    <text evidence="1">Protease subunit of a proteasome-like degradation complex believed to be a general protein degrading machinery.</text>
</comment>
<comment type="catalytic activity">
    <reaction evidence="1">
        <text>ATP-dependent cleavage of peptide bonds with broad specificity.</text>
        <dbReference type="EC" id="3.4.25.2"/>
    </reaction>
</comment>
<comment type="activity regulation">
    <text evidence="1">Allosterically activated by HslU binding.</text>
</comment>
<comment type="subunit">
    <text evidence="1">A double ring-shaped homohexamer of HslV is capped on each side by a ring-shaped HslU homohexamer. The assembly of the HslU/HslV complex is dependent on binding of ATP.</text>
</comment>
<comment type="subcellular location">
    <subcellularLocation>
        <location evidence="1">Cytoplasm</location>
    </subcellularLocation>
</comment>
<comment type="similarity">
    <text evidence="1">Belongs to the peptidase T1B family. HslV subfamily.</text>
</comment>